<reference key="1">
    <citation type="submission" date="2006-05" db="EMBL/GenBank/DDBJ databases">
        <title>Complete sequence of chromosome of Silicibacter sp. TM1040.</title>
        <authorList>
            <consortium name="US DOE Joint Genome Institute"/>
            <person name="Copeland A."/>
            <person name="Lucas S."/>
            <person name="Lapidus A."/>
            <person name="Barry K."/>
            <person name="Detter J.C."/>
            <person name="Glavina del Rio T."/>
            <person name="Hammon N."/>
            <person name="Israni S."/>
            <person name="Dalin E."/>
            <person name="Tice H."/>
            <person name="Pitluck S."/>
            <person name="Brettin T."/>
            <person name="Bruce D."/>
            <person name="Han C."/>
            <person name="Tapia R."/>
            <person name="Goodwin L."/>
            <person name="Thompson L.S."/>
            <person name="Gilna P."/>
            <person name="Schmutz J."/>
            <person name="Larimer F."/>
            <person name="Land M."/>
            <person name="Hauser L."/>
            <person name="Kyrpides N."/>
            <person name="Kim E."/>
            <person name="Belas R."/>
            <person name="Moran M.A."/>
            <person name="Buchan A."/>
            <person name="Gonzalez J.M."/>
            <person name="Schell M.A."/>
            <person name="Sun F."/>
            <person name="Richardson P."/>
        </authorList>
    </citation>
    <scope>NUCLEOTIDE SEQUENCE [LARGE SCALE GENOMIC DNA]</scope>
    <source>
        <strain>TM1040</strain>
    </source>
</reference>
<keyword id="KW-0963">Cytoplasm</keyword>
<keyword id="KW-0489">Methyltransferase</keyword>
<keyword id="KW-1185">Reference proteome</keyword>
<keyword id="KW-0949">S-adenosyl-L-methionine</keyword>
<keyword id="KW-0808">Transferase</keyword>
<proteinExistence type="inferred from homology"/>
<comment type="function">
    <text evidence="1">Catalyzes the methyl esterification of L-isoaspartyl residues in peptides and proteins that result from spontaneous decomposition of normal L-aspartyl and L-asparaginyl residues. It plays a role in the repair and/or degradation of damaged proteins.</text>
</comment>
<comment type="catalytic activity">
    <reaction evidence="1">
        <text>[protein]-L-isoaspartate + S-adenosyl-L-methionine = [protein]-L-isoaspartate alpha-methyl ester + S-adenosyl-L-homocysteine</text>
        <dbReference type="Rhea" id="RHEA:12705"/>
        <dbReference type="Rhea" id="RHEA-COMP:12143"/>
        <dbReference type="Rhea" id="RHEA-COMP:12144"/>
        <dbReference type="ChEBI" id="CHEBI:57856"/>
        <dbReference type="ChEBI" id="CHEBI:59789"/>
        <dbReference type="ChEBI" id="CHEBI:90596"/>
        <dbReference type="ChEBI" id="CHEBI:90598"/>
        <dbReference type="EC" id="2.1.1.77"/>
    </reaction>
</comment>
<comment type="subcellular location">
    <subcellularLocation>
        <location evidence="1">Cytoplasm</location>
    </subcellularLocation>
</comment>
<comment type="similarity">
    <text evidence="1">Belongs to the methyltransferase superfamily. L-isoaspartyl/D-aspartyl protein methyltransferase family.</text>
</comment>
<protein>
    <recommendedName>
        <fullName evidence="1">Protein-L-isoaspartate O-methyltransferase</fullName>
        <ecNumber evidence="1">2.1.1.77</ecNumber>
    </recommendedName>
    <alternativeName>
        <fullName evidence="1">L-isoaspartyl protein carboxyl methyltransferase</fullName>
    </alternativeName>
    <alternativeName>
        <fullName evidence="1">Protein L-isoaspartyl methyltransferase</fullName>
    </alternativeName>
    <alternativeName>
        <fullName evidence="1">Protein-beta-aspartate methyltransferase</fullName>
        <shortName evidence="1">PIMT</shortName>
    </alternativeName>
</protein>
<name>PIMT_RUEST</name>
<dbReference type="EC" id="2.1.1.77" evidence="1"/>
<dbReference type="EMBL" id="CP000377">
    <property type="protein sequence ID" value="ABF64525.1"/>
    <property type="molecule type" value="Genomic_DNA"/>
</dbReference>
<dbReference type="RefSeq" id="WP_011539120.1">
    <property type="nucleotide sequence ID" value="NC_008044.1"/>
</dbReference>
<dbReference type="SMR" id="Q1GFP1"/>
<dbReference type="STRING" id="292414.TM1040_1792"/>
<dbReference type="KEGG" id="sit:TM1040_1792"/>
<dbReference type="eggNOG" id="COG2518">
    <property type="taxonomic scope" value="Bacteria"/>
</dbReference>
<dbReference type="HOGENOM" id="CLU_055432_2_0_5"/>
<dbReference type="OrthoDB" id="9810066at2"/>
<dbReference type="Proteomes" id="UP000000636">
    <property type="component" value="Chromosome"/>
</dbReference>
<dbReference type="GO" id="GO:0005737">
    <property type="term" value="C:cytoplasm"/>
    <property type="evidence" value="ECO:0007669"/>
    <property type="project" value="UniProtKB-SubCell"/>
</dbReference>
<dbReference type="GO" id="GO:0004719">
    <property type="term" value="F:protein-L-isoaspartate (D-aspartate) O-methyltransferase activity"/>
    <property type="evidence" value="ECO:0007669"/>
    <property type="project" value="UniProtKB-UniRule"/>
</dbReference>
<dbReference type="GO" id="GO:0032259">
    <property type="term" value="P:methylation"/>
    <property type="evidence" value="ECO:0007669"/>
    <property type="project" value="UniProtKB-KW"/>
</dbReference>
<dbReference type="GO" id="GO:0036211">
    <property type="term" value="P:protein modification process"/>
    <property type="evidence" value="ECO:0007669"/>
    <property type="project" value="UniProtKB-UniRule"/>
</dbReference>
<dbReference type="GO" id="GO:0030091">
    <property type="term" value="P:protein repair"/>
    <property type="evidence" value="ECO:0007669"/>
    <property type="project" value="UniProtKB-UniRule"/>
</dbReference>
<dbReference type="CDD" id="cd02440">
    <property type="entry name" value="AdoMet_MTases"/>
    <property type="match status" value="1"/>
</dbReference>
<dbReference type="FunFam" id="3.40.50.150:FF:000010">
    <property type="entry name" value="Protein-L-isoaspartate O-methyltransferase"/>
    <property type="match status" value="1"/>
</dbReference>
<dbReference type="Gene3D" id="3.40.50.150">
    <property type="entry name" value="Vaccinia Virus protein VP39"/>
    <property type="match status" value="1"/>
</dbReference>
<dbReference type="HAMAP" id="MF_00090">
    <property type="entry name" value="PIMT"/>
    <property type="match status" value="1"/>
</dbReference>
<dbReference type="InterPro" id="IPR000682">
    <property type="entry name" value="PCMT"/>
</dbReference>
<dbReference type="InterPro" id="IPR029063">
    <property type="entry name" value="SAM-dependent_MTases_sf"/>
</dbReference>
<dbReference type="NCBIfam" id="TIGR00080">
    <property type="entry name" value="pimt"/>
    <property type="match status" value="1"/>
</dbReference>
<dbReference type="NCBIfam" id="NF001453">
    <property type="entry name" value="PRK00312.1"/>
    <property type="match status" value="1"/>
</dbReference>
<dbReference type="PANTHER" id="PTHR11579">
    <property type="entry name" value="PROTEIN-L-ISOASPARTATE O-METHYLTRANSFERASE"/>
    <property type="match status" value="1"/>
</dbReference>
<dbReference type="PANTHER" id="PTHR11579:SF0">
    <property type="entry name" value="PROTEIN-L-ISOASPARTATE(D-ASPARTATE) O-METHYLTRANSFERASE"/>
    <property type="match status" value="1"/>
</dbReference>
<dbReference type="Pfam" id="PF01135">
    <property type="entry name" value="PCMT"/>
    <property type="match status" value="1"/>
</dbReference>
<dbReference type="SUPFAM" id="SSF53335">
    <property type="entry name" value="S-adenosyl-L-methionine-dependent methyltransferases"/>
    <property type="match status" value="1"/>
</dbReference>
<organism>
    <name type="scientific">Ruegeria sp. (strain TM1040)</name>
    <name type="common">Silicibacter sp.</name>
    <dbReference type="NCBI Taxonomy" id="292414"/>
    <lineage>
        <taxon>Bacteria</taxon>
        <taxon>Pseudomonadati</taxon>
        <taxon>Pseudomonadota</taxon>
        <taxon>Alphaproteobacteria</taxon>
        <taxon>Rhodobacterales</taxon>
        <taxon>Roseobacteraceae</taxon>
        <taxon>Ruegeria</taxon>
    </lineage>
</organism>
<gene>
    <name evidence="1" type="primary">pcm</name>
    <name type="ordered locus">TM1040_1792</name>
</gene>
<feature type="chain" id="PRO_0000351940" description="Protein-L-isoaspartate O-methyltransferase">
    <location>
        <begin position="1"/>
        <end position="215"/>
    </location>
</feature>
<feature type="active site" evidence="1">
    <location>
        <position position="62"/>
    </location>
</feature>
<evidence type="ECO:0000255" key="1">
    <source>
        <dbReference type="HAMAP-Rule" id="MF_00090"/>
    </source>
</evidence>
<sequence>MSGPDAQTKMQFLFALRSRGVTEAAVLEAMEAVDRGLFLRGIFSERAYEDVPLPIACGQTISQPSVVGLMTQALQVNPRDTVLEVGTGSGYQAAILAKLARRVYTVDRHGRLVREARQVFQQMSLSNITSLVGDGSHGMPDQAPFDRIIVTAAAEDPPGPLLAQLKVGGIMVVPVGQSDAVQTLIRVRKTENGLEYDELRPVRFVPLLEGLGKDT</sequence>
<accession>Q1GFP1</accession>